<evidence type="ECO:0000250" key="1"/>
<evidence type="ECO:0000255" key="2"/>
<evidence type="ECO:0000256" key="3">
    <source>
        <dbReference type="SAM" id="MobiDB-lite"/>
    </source>
</evidence>
<evidence type="ECO:0000305" key="4"/>
<reference key="1">
    <citation type="journal article" date="1999" name="Dev. Biol.">
        <title>Three different noggin genes antagonize the activity of bone morphogenetic proteins in the zebrafish embryo.</title>
        <authorList>
            <person name="Fuerthauer M."/>
            <person name="Thisse B."/>
            <person name="Thisse C."/>
        </authorList>
    </citation>
    <scope>NUCLEOTIDE SEQUENCE [MRNA]</scope>
</reference>
<reference key="2">
    <citation type="submission" date="2004-03" db="EMBL/GenBank/DDBJ databases">
        <authorList>
            <consortium name="NIH - Zebrafish Gene Collection (ZGC) project"/>
        </authorList>
    </citation>
    <scope>NUCLEOTIDE SEQUENCE [LARGE SCALE MRNA]</scope>
    <source>
        <tissue>Embryo</tissue>
    </source>
</reference>
<gene>
    <name type="primary">nog2</name>
</gene>
<dbReference type="EMBL" id="AF159148">
    <property type="protein sequence ID" value="AAD43133.1"/>
    <property type="molecule type" value="mRNA"/>
</dbReference>
<dbReference type="EMBL" id="BC056600">
    <property type="protein sequence ID" value="AAH56600.1"/>
    <property type="molecule type" value="mRNA"/>
</dbReference>
<dbReference type="EMBL" id="BC067541">
    <property type="protein sequence ID" value="AAH67541.1"/>
    <property type="molecule type" value="mRNA"/>
</dbReference>
<dbReference type="RefSeq" id="NP_571067.1">
    <property type="nucleotide sequence ID" value="NM_130992.2"/>
</dbReference>
<dbReference type="SMR" id="Q9W740"/>
<dbReference type="FunCoup" id="Q9W740">
    <property type="interactions" value="2"/>
</dbReference>
<dbReference type="STRING" id="7955.ENSDARP00000111870"/>
<dbReference type="GlyCosmos" id="Q9W740">
    <property type="glycosylation" value="1 site, No reported glycans"/>
</dbReference>
<dbReference type="PaxDb" id="7955-ENSDARP00000111870"/>
<dbReference type="Ensembl" id="ENSDART00000063231">
    <property type="protein sequence ID" value="ENSDARP00000111870"/>
    <property type="gene ID" value="ENSDARG00000043066"/>
</dbReference>
<dbReference type="GeneID" id="30185"/>
<dbReference type="KEGG" id="dre:30185"/>
<dbReference type="AGR" id="ZFIN:ZDB-GENE-991206-14"/>
<dbReference type="CTD" id="30185"/>
<dbReference type="ZFIN" id="ZDB-GENE-991206-14">
    <property type="gene designation" value="nog2"/>
</dbReference>
<dbReference type="eggNOG" id="KOG4485">
    <property type="taxonomic scope" value="Eukaryota"/>
</dbReference>
<dbReference type="HOGENOM" id="CLU_085186_1_0_1"/>
<dbReference type="InParanoid" id="Q9W740"/>
<dbReference type="OMA" id="CMAERSC"/>
<dbReference type="OrthoDB" id="5950649at2759"/>
<dbReference type="PhylomeDB" id="Q9W740"/>
<dbReference type="TreeFam" id="TF353745"/>
<dbReference type="PRO" id="PR:Q9W740"/>
<dbReference type="Proteomes" id="UP000000437">
    <property type="component" value="Chromosome 24"/>
</dbReference>
<dbReference type="Bgee" id="ENSDARG00000043066">
    <property type="expression patterns" value="Expressed in muscle tissue and 23 other cell types or tissues"/>
</dbReference>
<dbReference type="GO" id="GO:0005615">
    <property type="term" value="C:extracellular space"/>
    <property type="evidence" value="ECO:0000318"/>
    <property type="project" value="GO_Central"/>
</dbReference>
<dbReference type="GO" id="GO:0051216">
    <property type="term" value="P:cartilage development"/>
    <property type="evidence" value="ECO:0007669"/>
    <property type="project" value="UniProtKB-KW"/>
</dbReference>
<dbReference type="GO" id="GO:0009953">
    <property type="term" value="P:dorsal/ventral pattern formation"/>
    <property type="evidence" value="ECO:0000318"/>
    <property type="project" value="GO_Central"/>
</dbReference>
<dbReference type="GO" id="GO:0030514">
    <property type="term" value="P:negative regulation of BMP signaling pathway"/>
    <property type="evidence" value="ECO:0000315"/>
    <property type="project" value="ZFIN"/>
</dbReference>
<dbReference type="GO" id="GO:0045596">
    <property type="term" value="P:negative regulation of cell differentiation"/>
    <property type="evidence" value="ECO:0007669"/>
    <property type="project" value="InterPro"/>
</dbReference>
<dbReference type="GO" id="GO:0001649">
    <property type="term" value="P:osteoblast differentiation"/>
    <property type="evidence" value="ECO:0000318"/>
    <property type="project" value="GO_Central"/>
</dbReference>
<dbReference type="FunFam" id="1.10.287.520:FF:000002">
    <property type="entry name" value="Noggin"/>
    <property type="match status" value="1"/>
</dbReference>
<dbReference type="Gene3D" id="2.10.90.10">
    <property type="entry name" value="Cystine-knot cytokines"/>
    <property type="match status" value="1"/>
</dbReference>
<dbReference type="Gene3D" id="1.10.287.520">
    <property type="entry name" value="Helix hairpin bin"/>
    <property type="match status" value="1"/>
</dbReference>
<dbReference type="InterPro" id="IPR029034">
    <property type="entry name" value="Cystine-knot_cytokine"/>
</dbReference>
<dbReference type="InterPro" id="IPR008717">
    <property type="entry name" value="Noggin"/>
</dbReference>
<dbReference type="PANTHER" id="PTHR10494">
    <property type="entry name" value="BONE MORPHOGENETIC PROTEIN INHIBITOR, NOGGIN"/>
    <property type="match status" value="1"/>
</dbReference>
<dbReference type="PANTHER" id="PTHR10494:SF4">
    <property type="entry name" value="NOGGIN"/>
    <property type="match status" value="1"/>
</dbReference>
<dbReference type="Pfam" id="PF05806">
    <property type="entry name" value="Noggin"/>
    <property type="match status" value="1"/>
</dbReference>
<dbReference type="PIRSF" id="PIRSF008129">
    <property type="entry name" value="Noggin"/>
    <property type="match status" value="1"/>
</dbReference>
<dbReference type="SUPFAM" id="SSF57501">
    <property type="entry name" value="Cystine-knot cytokines"/>
    <property type="match status" value="1"/>
</dbReference>
<organism>
    <name type="scientific">Danio rerio</name>
    <name type="common">Zebrafish</name>
    <name type="synonym">Brachydanio rerio</name>
    <dbReference type="NCBI Taxonomy" id="7955"/>
    <lineage>
        <taxon>Eukaryota</taxon>
        <taxon>Metazoa</taxon>
        <taxon>Chordata</taxon>
        <taxon>Craniata</taxon>
        <taxon>Vertebrata</taxon>
        <taxon>Euteleostomi</taxon>
        <taxon>Actinopterygii</taxon>
        <taxon>Neopterygii</taxon>
        <taxon>Teleostei</taxon>
        <taxon>Ostariophysi</taxon>
        <taxon>Cypriniformes</taxon>
        <taxon>Danionidae</taxon>
        <taxon>Danioninae</taxon>
        <taxon>Danio</taxon>
    </lineage>
</organism>
<comment type="function">
    <text>Inhibitor of bone morphogenetic proteins (BMP) signaling.</text>
</comment>
<comment type="subunit">
    <text evidence="1">Homodimer; disulfide-linked.</text>
</comment>
<comment type="subcellular location">
    <subcellularLocation>
        <location>Secreted</location>
    </subcellularLocation>
</comment>
<comment type="developmental stage">
    <text>First appears at the end of gastrulation in the axial mesoderm. By the 5-somite stage, expressed in telencephalon and anterior diencephalon. From early segmentation stages until the end of tail elongation, found in the tail bud. Expression is maintained during somitogenesis. At the 10-somite stage, detected in the antero-medial aspect of the somites. At 20 hours of development expression is observed in the ventro-medial part of the somite as well as in a small population of cells located more dorsally, adjacent to the neural tube. As development proceeds, expression in the dorsal somite is progressively lost, while ventro-medial sclerotomal cells lining the developing axial vasculature continue to show expression until 30 hours of development. In the head, expression is maintained in the telencephalon and anterior diencephalon until late embryogenesis. At the 15-somite stage, expressed in the forebrain, dorsal hindbrain and dorsal caudal spinal cord. Until late stages of embryogenesis strong expression is observed in the dorsal hindbrain walls.</text>
</comment>
<comment type="similarity">
    <text evidence="4">Belongs to the noggin family.</text>
</comment>
<proteinExistence type="evidence at transcript level"/>
<feature type="signal peptide" evidence="2">
    <location>
        <begin position="1"/>
        <end position="23"/>
    </location>
</feature>
<feature type="chain" id="PRO_0000019818" description="Noggin-2">
    <location>
        <begin position="24"/>
        <end position="212"/>
    </location>
</feature>
<feature type="region of interest" description="Disordered" evidence="3">
    <location>
        <begin position="37"/>
        <end position="56"/>
    </location>
</feature>
<feature type="compositionally biased region" description="Basic and acidic residues" evidence="3">
    <location>
        <begin position="47"/>
        <end position="56"/>
    </location>
</feature>
<feature type="glycosylation site" description="N-linked (GlcNAc...) asparagine" evidence="2">
    <location>
        <position position="84"/>
    </location>
</feature>
<name>NOGG2_DANRE</name>
<accession>Q9W740</accession>
<protein>
    <recommendedName>
        <fullName>Noggin-2</fullName>
    </recommendedName>
</protein>
<sequence length="212" mass="24531">MGSITRALPLLLLLLLCAHGTASQHHLRLRPLPSEGLPVPDLIENPDPEHDPREQDLSEKTLLKKLGSNFDANFMSIHLPAQLNASAPPELPRLPMPAELKKLDLTETPYGRRVKVGKKARRKFLQWLWMYTHCPVLYTWKDLGLRFWPRYIKEGNCFSERSCSFPEGMSCKPVKAVTKTFLRWYCQGFMRQKYCTWIQVQYPIISQCKCSC</sequence>
<keyword id="KW-0891">Chondrogenesis</keyword>
<keyword id="KW-0217">Developmental protein</keyword>
<keyword id="KW-0221">Differentiation</keyword>
<keyword id="KW-1015">Disulfide bond</keyword>
<keyword id="KW-0325">Glycoprotein</keyword>
<keyword id="KW-1185">Reference proteome</keyword>
<keyword id="KW-0964">Secreted</keyword>
<keyword id="KW-0732">Signal</keyword>